<accession>Q99RD6</accession>
<sequence>MNDLKSKSNIKLMKRVLTTYELRKYLKKYFCLTLDNYLVLAYLDVFKNDEGKYFMRDIISYIGIDQSRIVKSVKELSKKGYLNKCRDPHDSRNVIIVVSVKQHNYIKNLLSEININET</sequence>
<gene>
    <name type="primary">sarT</name>
    <name type="synonym">sarH3</name>
    <name type="ordered locus">SAV2498</name>
</gene>
<protein>
    <recommendedName>
        <fullName>HTH-type transcriptional regulator SarT</fullName>
    </recommendedName>
    <alternativeName>
        <fullName>Staphylococcal accessory regulator T</fullName>
    </alternativeName>
</protein>
<evidence type="ECO:0000250" key="1"/>
<evidence type="ECO:0000255" key="2"/>
<evidence type="ECO:0000305" key="3"/>
<organism>
    <name type="scientific">Staphylococcus aureus (strain Mu50 / ATCC 700699)</name>
    <dbReference type="NCBI Taxonomy" id="158878"/>
    <lineage>
        <taxon>Bacteria</taxon>
        <taxon>Bacillati</taxon>
        <taxon>Bacillota</taxon>
        <taxon>Bacilli</taxon>
        <taxon>Bacillales</taxon>
        <taxon>Staphylococcaceae</taxon>
        <taxon>Staphylococcus</taxon>
    </lineage>
</organism>
<keyword id="KW-0010">Activator</keyword>
<keyword id="KW-0963">Cytoplasm</keyword>
<keyword id="KW-0238">DNA-binding</keyword>
<keyword id="KW-0678">Repressor</keyword>
<keyword id="KW-0804">Transcription</keyword>
<keyword id="KW-0805">Transcription regulation</keyword>
<keyword id="KW-0843">Virulence</keyword>
<feature type="chain" id="PRO_0000219598" description="HTH-type transcriptional regulator SarT">
    <location>
        <begin position="1"/>
        <end position="118"/>
    </location>
</feature>
<feature type="DNA-binding region" description="H-T-H motif" evidence="2">
    <location>
        <begin position="55"/>
        <end position="78"/>
    </location>
</feature>
<dbReference type="EMBL" id="BA000017">
    <property type="protein sequence ID" value="BAB58660.1"/>
    <property type="status" value="ALT_INIT"/>
    <property type="molecule type" value="Genomic_DNA"/>
</dbReference>
<dbReference type="RefSeq" id="WP_000998872.1">
    <property type="nucleotide sequence ID" value="NC_002758.2"/>
</dbReference>
<dbReference type="SMR" id="Q99RD6"/>
<dbReference type="KEGG" id="sav:SAV2498"/>
<dbReference type="HOGENOM" id="CLU_2095348_0_0_9"/>
<dbReference type="Proteomes" id="UP000002481">
    <property type="component" value="Chromosome"/>
</dbReference>
<dbReference type="GO" id="GO:0005737">
    <property type="term" value="C:cytoplasm"/>
    <property type="evidence" value="ECO:0007669"/>
    <property type="project" value="UniProtKB-SubCell"/>
</dbReference>
<dbReference type="GO" id="GO:0003677">
    <property type="term" value="F:DNA binding"/>
    <property type="evidence" value="ECO:0007669"/>
    <property type="project" value="UniProtKB-KW"/>
</dbReference>
<dbReference type="GO" id="GO:0003700">
    <property type="term" value="F:DNA-binding transcription factor activity"/>
    <property type="evidence" value="ECO:0007669"/>
    <property type="project" value="InterPro"/>
</dbReference>
<dbReference type="GO" id="GO:0006950">
    <property type="term" value="P:response to stress"/>
    <property type="evidence" value="ECO:0007669"/>
    <property type="project" value="TreeGrafter"/>
</dbReference>
<dbReference type="Gene3D" id="1.10.10.10">
    <property type="entry name" value="Winged helix-like DNA-binding domain superfamily/Winged helix DNA-binding domain"/>
    <property type="match status" value="1"/>
</dbReference>
<dbReference type="InterPro" id="IPR039422">
    <property type="entry name" value="MarR/SlyA-like"/>
</dbReference>
<dbReference type="InterPro" id="IPR010166">
    <property type="entry name" value="SarA/Rot_dom"/>
</dbReference>
<dbReference type="InterPro" id="IPR055166">
    <property type="entry name" value="Transc_reg_Sar_Rot_HTH"/>
</dbReference>
<dbReference type="InterPro" id="IPR036388">
    <property type="entry name" value="WH-like_DNA-bd_sf"/>
</dbReference>
<dbReference type="InterPro" id="IPR036390">
    <property type="entry name" value="WH_DNA-bd_sf"/>
</dbReference>
<dbReference type="NCBIfam" id="TIGR01889">
    <property type="entry name" value="Staph_reg_Sar"/>
    <property type="match status" value="1"/>
</dbReference>
<dbReference type="PANTHER" id="PTHR33164:SF5">
    <property type="entry name" value="ORGANIC HYDROPEROXIDE RESISTANCE TRANSCRIPTIONAL REGULATOR"/>
    <property type="match status" value="1"/>
</dbReference>
<dbReference type="PANTHER" id="PTHR33164">
    <property type="entry name" value="TRANSCRIPTIONAL REGULATOR, MARR FAMILY"/>
    <property type="match status" value="1"/>
</dbReference>
<dbReference type="Pfam" id="PF22381">
    <property type="entry name" value="Staph_reg_Sar_Rot"/>
    <property type="match status" value="1"/>
</dbReference>
<dbReference type="SUPFAM" id="SSF46785">
    <property type="entry name" value="Winged helix' DNA-binding domain"/>
    <property type="match status" value="1"/>
</dbReference>
<reference key="1">
    <citation type="journal article" date="2001" name="Lancet">
        <title>Whole genome sequencing of meticillin-resistant Staphylococcus aureus.</title>
        <authorList>
            <person name="Kuroda M."/>
            <person name="Ohta T."/>
            <person name="Uchiyama I."/>
            <person name="Baba T."/>
            <person name="Yuzawa H."/>
            <person name="Kobayashi I."/>
            <person name="Cui L."/>
            <person name="Oguchi A."/>
            <person name="Aoki K."/>
            <person name="Nagai Y."/>
            <person name="Lian J.-Q."/>
            <person name="Ito T."/>
            <person name="Kanamori M."/>
            <person name="Matsumaru H."/>
            <person name="Maruyama A."/>
            <person name="Murakami H."/>
            <person name="Hosoyama A."/>
            <person name="Mizutani-Ui Y."/>
            <person name="Takahashi N.K."/>
            <person name="Sawano T."/>
            <person name="Inoue R."/>
            <person name="Kaito C."/>
            <person name="Sekimizu K."/>
            <person name="Hirakawa H."/>
            <person name="Kuhara S."/>
            <person name="Goto S."/>
            <person name="Yabuzaki J."/>
            <person name="Kanehisa M."/>
            <person name="Yamashita A."/>
            <person name="Oshima K."/>
            <person name="Furuya K."/>
            <person name="Yoshino C."/>
            <person name="Shiba T."/>
            <person name="Hattori M."/>
            <person name="Ogasawara N."/>
            <person name="Hayashi H."/>
            <person name="Hiramatsu K."/>
        </authorList>
    </citation>
    <scope>NUCLEOTIDE SEQUENCE [LARGE SCALE GENOMIC DNA]</scope>
    <source>
        <strain>Mu50 / ATCC 700699</strain>
    </source>
</reference>
<comment type="function">
    <text evidence="1">Transcriptional regulator acting as an intermediary between major regulators SarA and agr and virulence genes. Represses alpha-hemolysin (hla) gene expression (By similarity).</text>
</comment>
<comment type="subcellular location">
    <subcellularLocation>
        <location evidence="1">Cytoplasm</location>
    </subcellularLocation>
</comment>
<comment type="similarity">
    <text evidence="3">Belongs to the SarA family.</text>
</comment>
<comment type="sequence caution" evidence="3">
    <conflict type="erroneous initiation">
        <sequence resource="EMBL-CDS" id="BAB58660"/>
    </conflict>
</comment>
<name>SART_STAAM</name>
<proteinExistence type="inferred from homology"/>